<protein>
    <recommendedName>
        <fullName evidence="1">Pyridoxine/pyridoxamine 5'-phosphate oxidase</fullName>
        <ecNumber evidence="1">1.4.3.5</ecNumber>
    </recommendedName>
    <alternativeName>
        <fullName evidence="1">PNP/PMP oxidase</fullName>
        <shortName evidence="1">PNPOx</shortName>
    </alternativeName>
    <alternativeName>
        <fullName evidence="1">Pyridoxal 5'-phosphate synthase</fullName>
    </alternativeName>
</protein>
<keyword id="KW-0285">Flavoprotein</keyword>
<keyword id="KW-0288">FMN</keyword>
<keyword id="KW-0560">Oxidoreductase</keyword>
<keyword id="KW-0664">Pyridoxine biosynthesis</keyword>
<dbReference type="EC" id="1.4.3.5" evidence="1"/>
<dbReference type="EMBL" id="CU468230">
    <property type="protein sequence ID" value="CAP02714.1"/>
    <property type="molecule type" value="Genomic_DNA"/>
</dbReference>
<dbReference type="SMR" id="B0VNC8"/>
<dbReference type="KEGG" id="abm:ABSDF3447"/>
<dbReference type="HOGENOM" id="CLU_032263_2_2_6"/>
<dbReference type="UniPathway" id="UPA01068">
    <property type="reaction ID" value="UER00304"/>
</dbReference>
<dbReference type="UniPathway" id="UPA01068">
    <property type="reaction ID" value="UER00305"/>
</dbReference>
<dbReference type="Proteomes" id="UP000001741">
    <property type="component" value="Chromosome"/>
</dbReference>
<dbReference type="GO" id="GO:0010181">
    <property type="term" value="F:FMN binding"/>
    <property type="evidence" value="ECO:0007669"/>
    <property type="project" value="UniProtKB-UniRule"/>
</dbReference>
<dbReference type="GO" id="GO:0004733">
    <property type="term" value="F:pyridoxamine phosphate oxidase activity"/>
    <property type="evidence" value="ECO:0007669"/>
    <property type="project" value="UniProtKB-UniRule"/>
</dbReference>
<dbReference type="GO" id="GO:0008615">
    <property type="term" value="P:pyridoxine biosynthetic process"/>
    <property type="evidence" value="ECO:0007669"/>
    <property type="project" value="UniProtKB-KW"/>
</dbReference>
<dbReference type="Gene3D" id="2.30.110.10">
    <property type="entry name" value="Electron Transport, Fmn-binding Protein, Chain A"/>
    <property type="match status" value="1"/>
</dbReference>
<dbReference type="HAMAP" id="MF_01629">
    <property type="entry name" value="PdxH"/>
    <property type="match status" value="1"/>
</dbReference>
<dbReference type="InterPro" id="IPR000659">
    <property type="entry name" value="Pyridox_Oxase"/>
</dbReference>
<dbReference type="InterPro" id="IPR019740">
    <property type="entry name" value="Pyridox_Oxase_CS"/>
</dbReference>
<dbReference type="InterPro" id="IPR011576">
    <property type="entry name" value="Pyridox_Oxase_N"/>
</dbReference>
<dbReference type="InterPro" id="IPR019576">
    <property type="entry name" value="Pyridoxamine_oxidase_dimer_C"/>
</dbReference>
<dbReference type="InterPro" id="IPR012349">
    <property type="entry name" value="Split_barrel_FMN-bd"/>
</dbReference>
<dbReference type="NCBIfam" id="TIGR00558">
    <property type="entry name" value="pdxH"/>
    <property type="match status" value="1"/>
</dbReference>
<dbReference type="NCBIfam" id="NF004231">
    <property type="entry name" value="PRK05679.1"/>
    <property type="match status" value="1"/>
</dbReference>
<dbReference type="PANTHER" id="PTHR10851:SF0">
    <property type="entry name" value="PYRIDOXINE-5'-PHOSPHATE OXIDASE"/>
    <property type="match status" value="1"/>
</dbReference>
<dbReference type="PANTHER" id="PTHR10851">
    <property type="entry name" value="PYRIDOXINE-5-PHOSPHATE OXIDASE"/>
    <property type="match status" value="1"/>
</dbReference>
<dbReference type="Pfam" id="PF10590">
    <property type="entry name" value="PNP_phzG_C"/>
    <property type="match status" value="1"/>
</dbReference>
<dbReference type="Pfam" id="PF01243">
    <property type="entry name" value="PNPOx_N"/>
    <property type="match status" value="1"/>
</dbReference>
<dbReference type="PIRSF" id="PIRSF000190">
    <property type="entry name" value="Pyd_amn-ph_oxd"/>
    <property type="match status" value="1"/>
</dbReference>
<dbReference type="SUPFAM" id="SSF50475">
    <property type="entry name" value="FMN-binding split barrel"/>
    <property type="match status" value="1"/>
</dbReference>
<dbReference type="PROSITE" id="PS01064">
    <property type="entry name" value="PYRIDOX_OXIDASE"/>
    <property type="match status" value="1"/>
</dbReference>
<reference key="1">
    <citation type="journal article" date="2008" name="PLoS ONE">
        <title>Comparative analysis of Acinetobacters: three genomes for three lifestyles.</title>
        <authorList>
            <person name="Vallenet D."/>
            <person name="Nordmann P."/>
            <person name="Barbe V."/>
            <person name="Poirel L."/>
            <person name="Mangenot S."/>
            <person name="Bataille E."/>
            <person name="Dossat C."/>
            <person name="Gas S."/>
            <person name="Kreimeyer A."/>
            <person name="Lenoble P."/>
            <person name="Oztas S."/>
            <person name="Poulain J."/>
            <person name="Segurens B."/>
            <person name="Robert C."/>
            <person name="Abergel C."/>
            <person name="Claverie J.-M."/>
            <person name="Raoult D."/>
            <person name="Medigue C."/>
            <person name="Weissenbach J."/>
            <person name="Cruveiller S."/>
        </authorList>
    </citation>
    <scope>NUCLEOTIDE SEQUENCE [LARGE SCALE GENOMIC DNA]</scope>
    <source>
        <strain>SDF</strain>
    </source>
</reference>
<name>PDXH_ACIBS</name>
<comment type="function">
    <text evidence="1">Catalyzes the oxidation of either pyridoxine 5'-phosphate (PNP) or pyridoxamine 5'-phosphate (PMP) into pyridoxal 5'-phosphate (PLP).</text>
</comment>
<comment type="catalytic activity">
    <reaction evidence="1">
        <text>pyridoxamine 5'-phosphate + O2 + H2O = pyridoxal 5'-phosphate + H2O2 + NH4(+)</text>
        <dbReference type="Rhea" id="RHEA:15817"/>
        <dbReference type="ChEBI" id="CHEBI:15377"/>
        <dbReference type="ChEBI" id="CHEBI:15379"/>
        <dbReference type="ChEBI" id="CHEBI:16240"/>
        <dbReference type="ChEBI" id="CHEBI:28938"/>
        <dbReference type="ChEBI" id="CHEBI:58451"/>
        <dbReference type="ChEBI" id="CHEBI:597326"/>
        <dbReference type="EC" id="1.4.3.5"/>
    </reaction>
</comment>
<comment type="catalytic activity">
    <reaction evidence="1">
        <text>pyridoxine 5'-phosphate + O2 = pyridoxal 5'-phosphate + H2O2</text>
        <dbReference type="Rhea" id="RHEA:15149"/>
        <dbReference type="ChEBI" id="CHEBI:15379"/>
        <dbReference type="ChEBI" id="CHEBI:16240"/>
        <dbReference type="ChEBI" id="CHEBI:58589"/>
        <dbReference type="ChEBI" id="CHEBI:597326"/>
        <dbReference type="EC" id="1.4.3.5"/>
    </reaction>
</comment>
<comment type="cofactor">
    <cofactor evidence="1">
        <name>FMN</name>
        <dbReference type="ChEBI" id="CHEBI:58210"/>
    </cofactor>
    <text evidence="1">Binds 1 FMN per subunit.</text>
</comment>
<comment type="pathway">
    <text evidence="1">Cofactor metabolism; pyridoxal 5'-phosphate salvage; pyridoxal 5'-phosphate from pyridoxamine 5'-phosphate: step 1/1.</text>
</comment>
<comment type="pathway">
    <text evidence="1">Cofactor metabolism; pyridoxal 5'-phosphate salvage; pyridoxal 5'-phosphate from pyridoxine 5'-phosphate: step 1/1.</text>
</comment>
<comment type="subunit">
    <text evidence="1">Homodimer.</text>
</comment>
<comment type="similarity">
    <text evidence="1">Belongs to the pyridoxamine 5'-phosphate oxidase family.</text>
</comment>
<accession>B0VNC8</accession>
<organism>
    <name type="scientific">Acinetobacter baumannii (strain SDF)</name>
    <dbReference type="NCBI Taxonomy" id="509170"/>
    <lineage>
        <taxon>Bacteria</taxon>
        <taxon>Pseudomonadati</taxon>
        <taxon>Pseudomonadota</taxon>
        <taxon>Gammaproteobacteria</taxon>
        <taxon>Moraxellales</taxon>
        <taxon>Moraxellaceae</taxon>
        <taxon>Acinetobacter</taxon>
        <taxon>Acinetobacter calcoaceticus/baumannii complex</taxon>
    </lineage>
</organism>
<feature type="chain" id="PRO_1000186281" description="Pyridoxine/pyridoxamine 5'-phosphate oxidase">
    <location>
        <begin position="1"/>
        <end position="218"/>
    </location>
</feature>
<feature type="binding site" evidence="1">
    <location>
        <begin position="12"/>
        <end position="15"/>
    </location>
    <ligand>
        <name>substrate</name>
    </ligand>
</feature>
<feature type="binding site" evidence="1">
    <location>
        <begin position="65"/>
        <end position="70"/>
    </location>
    <ligand>
        <name>FMN</name>
        <dbReference type="ChEBI" id="CHEBI:58210"/>
    </ligand>
</feature>
<feature type="binding site" evidence="1">
    <location>
        <position position="70"/>
    </location>
    <ligand>
        <name>substrate</name>
    </ligand>
</feature>
<feature type="binding site" evidence="1">
    <location>
        <begin position="80"/>
        <end position="81"/>
    </location>
    <ligand>
        <name>FMN</name>
        <dbReference type="ChEBI" id="CHEBI:58210"/>
    </ligand>
</feature>
<feature type="binding site" evidence="1">
    <location>
        <position position="87"/>
    </location>
    <ligand>
        <name>FMN</name>
        <dbReference type="ChEBI" id="CHEBI:58210"/>
    </ligand>
</feature>
<feature type="binding site" evidence="1">
    <location>
        <position position="109"/>
    </location>
    <ligand>
        <name>FMN</name>
        <dbReference type="ChEBI" id="CHEBI:58210"/>
    </ligand>
</feature>
<feature type="binding site" evidence="1">
    <location>
        <position position="127"/>
    </location>
    <ligand>
        <name>substrate</name>
    </ligand>
</feature>
<feature type="binding site" evidence="1">
    <location>
        <position position="131"/>
    </location>
    <ligand>
        <name>substrate</name>
    </ligand>
</feature>
<feature type="binding site" evidence="1">
    <location>
        <position position="135"/>
    </location>
    <ligand>
        <name>substrate</name>
    </ligand>
</feature>
<feature type="binding site" evidence="1">
    <location>
        <begin position="145"/>
        <end position="146"/>
    </location>
    <ligand>
        <name>FMN</name>
        <dbReference type="ChEBI" id="CHEBI:58210"/>
    </ligand>
</feature>
<feature type="binding site" evidence="1">
    <location>
        <position position="191"/>
    </location>
    <ligand>
        <name>FMN</name>
        <dbReference type="ChEBI" id="CHEBI:58210"/>
    </ligand>
</feature>
<feature type="binding site" evidence="1">
    <location>
        <begin position="197"/>
        <end position="199"/>
    </location>
    <ligand>
        <name>substrate</name>
    </ligand>
</feature>
<feature type="binding site" evidence="1">
    <location>
        <position position="201"/>
    </location>
    <ligand>
        <name>FMN</name>
        <dbReference type="ChEBI" id="CHEBI:58210"/>
    </ligand>
</feature>
<gene>
    <name evidence="1" type="primary">pdxH</name>
    <name type="ordered locus">ABSDF3447</name>
</gene>
<proteinExistence type="inferred from homology"/>
<evidence type="ECO:0000255" key="1">
    <source>
        <dbReference type="HAMAP-Rule" id="MF_01629"/>
    </source>
</evidence>
<sequence length="218" mass="25481">MSDVIKDLSELRLSYEQGELYETQVASNPHEQFLGWFNHALAANLHEPYAMSLATASASGRPHVRTVLLRGATEAGYDFYTNYDSQKGIDLAENPYAELLFYWPSLERQVRVGGHVVKIPEQESTDYYHKRPRDSQIAAYISTPQSGKIESRELLQQRFQDLQQQVQSHEVLDKPEFWGGYRLQPDYYEFWQGRPNRLHDRLSYEKIDGQWTLHRLMP</sequence>